<feature type="chain" id="PRO_0000195482" description="ATP synthase protein 8">
    <location>
        <begin position="1"/>
        <end position="66"/>
    </location>
</feature>
<feature type="transmembrane region" description="Helical" evidence="4">
    <location>
        <begin position="8"/>
        <end position="24"/>
    </location>
</feature>
<feature type="modified residue" description="N6-acetyllysine; alternate" evidence="3">
    <location>
        <position position="54"/>
    </location>
</feature>
<feature type="modified residue" description="N6-succinyllysine; alternate" evidence="3">
    <location>
        <position position="54"/>
    </location>
</feature>
<feature type="modified residue" description="N6-acetyllysine" evidence="3">
    <location>
        <position position="57"/>
    </location>
</feature>
<proteinExistence type="inferred from homology"/>
<dbReference type="EMBL" id="AY065856">
    <property type="protein sequence ID" value="AAL50140.1"/>
    <property type="molecule type" value="Genomic_DNA"/>
</dbReference>
<dbReference type="SMR" id="Q8HG02"/>
<dbReference type="GO" id="GO:0031966">
    <property type="term" value="C:mitochondrial membrane"/>
    <property type="evidence" value="ECO:0007669"/>
    <property type="project" value="UniProtKB-SubCell"/>
</dbReference>
<dbReference type="GO" id="GO:0045259">
    <property type="term" value="C:proton-transporting ATP synthase complex"/>
    <property type="evidence" value="ECO:0000250"/>
    <property type="project" value="UniProtKB"/>
</dbReference>
<dbReference type="GO" id="GO:0015078">
    <property type="term" value="F:proton transmembrane transporter activity"/>
    <property type="evidence" value="ECO:0007669"/>
    <property type="project" value="InterPro"/>
</dbReference>
<dbReference type="GO" id="GO:0015986">
    <property type="term" value="P:proton motive force-driven ATP synthesis"/>
    <property type="evidence" value="ECO:0007669"/>
    <property type="project" value="InterPro"/>
</dbReference>
<dbReference type="InterPro" id="IPR039017">
    <property type="entry name" value="ATP8_mammal"/>
</dbReference>
<dbReference type="InterPro" id="IPR001421">
    <property type="entry name" value="ATP8_metazoa"/>
</dbReference>
<dbReference type="PANTHER" id="PTHR13722">
    <property type="entry name" value="ATP SYNTHASE PROTEIN 8"/>
    <property type="match status" value="1"/>
</dbReference>
<dbReference type="PANTHER" id="PTHR13722:SF0">
    <property type="entry name" value="ATP SYNTHASE PROTEIN 8"/>
    <property type="match status" value="1"/>
</dbReference>
<dbReference type="Pfam" id="PF00895">
    <property type="entry name" value="ATP-synt_8"/>
    <property type="match status" value="1"/>
</dbReference>
<sequence>MPQLDMSPWPMVIMSMILTLFYITQLKMLNFTFYNTPSSKLSMPHKHKTTWELKWTKIYLPPSMYQ</sequence>
<accession>Q8HG02</accession>
<comment type="function">
    <text evidence="1">Mitochondrial membrane ATP synthase (F(1)F(0) ATP synthase or Complex V) produces ATP from ADP in the presence of a proton gradient across the membrane which is generated by electron transport complexes of the respiratory chain. F-type ATPases consist of two structural domains, F(1) - containing the extramembraneous catalytic core and F(0) - containing the membrane proton channel, linked together by a central stalk and a peripheral stalk. During catalysis, ATP synthesis in the catalytic domain of F(1) is coupled via a rotary mechanism of the central stalk subunits to proton translocation. Part of the complex F(0) domain. Minor subunit located with subunit a in the membrane (By similarity).</text>
</comment>
<comment type="subunit">
    <text evidence="2">F-type ATPases have 2 components, CF(1) - the catalytic core - and CF(0) - the membrane proton channel. Component of an ATP synthase complex composed of ATP5PB, ATP5MC1, ATP5F1E, ATP5PD, ATP5ME, ATP5PF, ATP5MF, MT-ATP6, MT-ATP8, ATP5F1A, ATP5F1B, ATP5F1D, ATP5F1C, ATP5PO, ATP5MG, ATP5MK and ATP5MJ (By similarity). Interacts with PRICKLE3 (By similarity).</text>
</comment>
<comment type="subcellular location">
    <subcellularLocation>
        <location>Mitochondrion membrane</location>
        <topology>Single-pass membrane protein</topology>
    </subcellularLocation>
</comment>
<comment type="similarity">
    <text evidence="5">Belongs to the ATPase protein 8 family.</text>
</comment>
<reference key="1">
    <citation type="journal article" date="2003" name="Mol. Phylogenet. Evol.">
        <title>Molecular systematics and biogeography of the neotropical monkey genus, Alouatta.</title>
        <authorList>
            <person name="Cortes-Ortiz L."/>
            <person name="Bermingham E."/>
            <person name="Rico C."/>
            <person name="Rodriguez-Luna E."/>
            <person name="Sampaio I."/>
            <person name="Ruiz-Garcia M."/>
        </authorList>
    </citation>
    <scope>NUCLEOTIDE SEQUENCE [GENOMIC DNA]</scope>
</reference>
<evidence type="ECO:0000250" key="1"/>
<evidence type="ECO:0000250" key="2">
    <source>
        <dbReference type="UniProtKB" id="P03928"/>
    </source>
</evidence>
<evidence type="ECO:0000250" key="3">
    <source>
        <dbReference type="UniProtKB" id="P03930"/>
    </source>
</evidence>
<evidence type="ECO:0000255" key="4"/>
<evidence type="ECO:0000305" key="5"/>
<protein>
    <recommendedName>
        <fullName>ATP synthase protein 8</fullName>
    </recommendedName>
    <alternativeName>
        <fullName>A6L</fullName>
    </alternativeName>
    <alternativeName>
        <fullName>F-ATPase subunit 8</fullName>
    </alternativeName>
</protein>
<keyword id="KW-0007">Acetylation</keyword>
<keyword id="KW-0066">ATP synthesis</keyword>
<keyword id="KW-0138">CF(0)</keyword>
<keyword id="KW-0375">Hydrogen ion transport</keyword>
<keyword id="KW-0406">Ion transport</keyword>
<keyword id="KW-0472">Membrane</keyword>
<keyword id="KW-0496">Mitochondrion</keyword>
<keyword id="KW-0812">Transmembrane</keyword>
<keyword id="KW-1133">Transmembrane helix</keyword>
<keyword id="KW-0813">Transport</keyword>
<gene>
    <name type="primary">MT-ATP8</name>
    <name type="synonym">ATP8</name>
    <name type="synonym">ATPASE8</name>
    <name type="synonym">MTATP8</name>
</gene>
<geneLocation type="mitochondrion"/>
<name>ATP8_ALOSA</name>
<organism>
    <name type="scientific">Alouatta sara</name>
    <name type="common">Bolivian red howler monkey</name>
    <dbReference type="NCBI Taxonomy" id="121123"/>
    <lineage>
        <taxon>Eukaryota</taxon>
        <taxon>Metazoa</taxon>
        <taxon>Chordata</taxon>
        <taxon>Craniata</taxon>
        <taxon>Vertebrata</taxon>
        <taxon>Euteleostomi</taxon>
        <taxon>Mammalia</taxon>
        <taxon>Eutheria</taxon>
        <taxon>Euarchontoglires</taxon>
        <taxon>Primates</taxon>
        <taxon>Haplorrhini</taxon>
        <taxon>Platyrrhini</taxon>
        <taxon>Atelidae</taxon>
        <taxon>Alouattinae</taxon>
        <taxon>Alouatta</taxon>
    </lineage>
</organism>